<organism>
    <name type="scientific">Geobacillus kaustophilus (strain HTA426)</name>
    <dbReference type="NCBI Taxonomy" id="235909"/>
    <lineage>
        <taxon>Bacteria</taxon>
        <taxon>Bacillati</taxon>
        <taxon>Bacillota</taxon>
        <taxon>Bacilli</taxon>
        <taxon>Bacillales</taxon>
        <taxon>Anoxybacillaceae</taxon>
        <taxon>Geobacillus</taxon>
        <taxon>Geobacillus thermoleovorans group</taxon>
    </lineage>
</organism>
<reference key="1">
    <citation type="journal article" date="2004" name="Nucleic Acids Res.">
        <title>Thermoadaptation trait revealed by the genome sequence of thermophilic Geobacillus kaustophilus.</title>
        <authorList>
            <person name="Takami H."/>
            <person name="Takaki Y."/>
            <person name="Chee G.-J."/>
            <person name="Nishi S."/>
            <person name="Shimamura S."/>
            <person name="Suzuki H."/>
            <person name="Matsui S."/>
            <person name="Uchiyama I."/>
        </authorList>
    </citation>
    <scope>NUCLEOTIDE SEQUENCE [LARGE SCALE GENOMIC DNA]</scope>
    <source>
        <strain>HTA426</strain>
    </source>
</reference>
<proteinExistence type="inferred from homology"/>
<comment type="function">
    <text evidence="1">Transaldolase is important for the balance of metabolites in the pentose-phosphate pathway.</text>
</comment>
<comment type="catalytic activity">
    <reaction evidence="1">
        <text>D-sedoheptulose 7-phosphate + D-glyceraldehyde 3-phosphate = D-erythrose 4-phosphate + beta-D-fructose 6-phosphate</text>
        <dbReference type="Rhea" id="RHEA:17053"/>
        <dbReference type="ChEBI" id="CHEBI:16897"/>
        <dbReference type="ChEBI" id="CHEBI:57483"/>
        <dbReference type="ChEBI" id="CHEBI:57634"/>
        <dbReference type="ChEBI" id="CHEBI:59776"/>
        <dbReference type="EC" id="2.2.1.2"/>
    </reaction>
</comment>
<comment type="pathway">
    <text evidence="1">Carbohydrate degradation; pentose phosphate pathway; D-glyceraldehyde 3-phosphate and beta-D-fructose 6-phosphate from D-ribose 5-phosphate and D-xylulose 5-phosphate (non-oxidative stage): step 2/3.</text>
</comment>
<comment type="subcellular location">
    <subcellularLocation>
        <location evidence="1">Cytoplasm</location>
    </subcellularLocation>
</comment>
<comment type="similarity">
    <text evidence="1">Belongs to the transaldolase family. Type 3B subfamily.</text>
</comment>
<sequence length="213" mass="23063">MKFFIDTANLEEIKHAHELGILAGVTTNPSLVAKENVSFHDRLREITSIVSGSVSAEVISTDAAGMIAEGEELAKIAPNITIKVPMTPEGLKAVKAFSEKGIQTNVTLVFTANQALLAARAGATYVSPFLGRLDDIGHNGLELISTIAEIFNIHGIETEIIAASIRHPHHVTEAALRGAHIATVPYKVLMQLFNHPLTDQGIEKFLADWNRQK</sequence>
<protein>
    <recommendedName>
        <fullName evidence="1">Probable transaldolase</fullName>
        <ecNumber evidence="1">2.2.1.2</ecNumber>
    </recommendedName>
</protein>
<accession>Q5KUG6</accession>
<feature type="chain" id="PRO_1000126317" description="Probable transaldolase">
    <location>
        <begin position="1"/>
        <end position="213"/>
    </location>
</feature>
<feature type="active site" description="Schiff-base intermediate with substrate" evidence="1">
    <location>
        <position position="83"/>
    </location>
</feature>
<evidence type="ECO:0000255" key="1">
    <source>
        <dbReference type="HAMAP-Rule" id="MF_00494"/>
    </source>
</evidence>
<keyword id="KW-0963">Cytoplasm</keyword>
<keyword id="KW-0570">Pentose shunt</keyword>
<keyword id="KW-1185">Reference proteome</keyword>
<keyword id="KW-0704">Schiff base</keyword>
<keyword id="KW-0808">Transferase</keyword>
<name>TAL_GEOKA</name>
<dbReference type="EC" id="2.2.1.2" evidence="1"/>
<dbReference type="EMBL" id="BA000043">
    <property type="protein sequence ID" value="BAD77670.1"/>
    <property type="molecule type" value="Genomic_DNA"/>
</dbReference>
<dbReference type="SMR" id="Q5KUG6"/>
<dbReference type="STRING" id="235909.GK3385"/>
<dbReference type="KEGG" id="gka:GK3385"/>
<dbReference type="eggNOG" id="COG0176">
    <property type="taxonomic scope" value="Bacteria"/>
</dbReference>
<dbReference type="HOGENOM" id="CLU_079764_0_0_9"/>
<dbReference type="UniPathway" id="UPA00115">
    <property type="reaction ID" value="UER00414"/>
</dbReference>
<dbReference type="Proteomes" id="UP000001172">
    <property type="component" value="Chromosome"/>
</dbReference>
<dbReference type="GO" id="GO:0005737">
    <property type="term" value="C:cytoplasm"/>
    <property type="evidence" value="ECO:0007669"/>
    <property type="project" value="UniProtKB-SubCell"/>
</dbReference>
<dbReference type="GO" id="GO:0016832">
    <property type="term" value="F:aldehyde-lyase activity"/>
    <property type="evidence" value="ECO:0007669"/>
    <property type="project" value="InterPro"/>
</dbReference>
<dbReference type="GO" id="GO:0004801">
    <property type="term" value="F:transaldolase activity"/>
    <property type="evidence" value="ECO:0007669"/>
    <property type="project" value="UniProtKB-UniRule"/>
</dbReference>
<dbReference type="GO" id="GO:0005975">
    <property type="term" value="P:carbohydrate metabolic process"/>
    <property type="evidence" value="ECO:0007669"/>
    <property type="project" value="InterPro"/>
</dbReference>
<dbReference type="GO" id="GO:0006098">
    <property type="term" value="P:pentose-phosphate shunt"/>
    <property type="evidence" value="ECO:0007669"/>
    <property type="project" value="UniProtKB-UniRule"/>
</dbReference>
<dbReference type="CDD" id="cd00956">
    <property type="entry name" value="Transaldolase_FSA"/>
    <property type="match status" value="1"/>
</dbReference>
<dbReference type="FunFam" id="3.20.20.70:FF:000018">
    <property type="entry name" value="Probable transaldolase"/>
    <property type="match status" value="1"/>
</dbReference>
<dbReference type="Gene3D" id="3.20.20.70">
    <property type="entry name" value="Aldolase class I"/>
    <property type="match status" value="1"/>
</dbReference>
<dbReference type="HAMAP" id="MF_00494">
    <property type="entry name" value="Transaldolase_3b"/>
    <property type="match status" value="1"/>
</dbReference>
<dbReference type="InterPro" id="IPR013785">
    <property type="entry name" value="Aldolase_TIM"/>
</dbReference>
<dbReference type="InterPro" id="IPR001585">
    <property type="entry name" value="TAL/FSA"/>
</dbReference>
<dbReference type="InterPro" id="IPR022999">
    <property type="entry name" value="Transaldolase_3B"/>
</dbReference>
<dbReference type="InterPro" id="IPR004731">
    <property type="entry name" value="Transaldolase_3B/F6P_aldolase"/>
</dbReference>
<dbReference type="InterPro" id="IPR018225">
    <property type="entry name" value="Transaldolase_AS"/>
</dbReference>
<dbReference type="InterPro" id="IPR033919">
    <property type="entry name" value="TSA/FSA_arc/bac"/>
</dbReference>
<dbReference type="NCBIfam" id="TIGR00875">
    <property type="entry name" value="fsa_talC_mipB"/>
    <property type="match status" value="1"/>
</dbReference>
<dbReference type="PANTHER" id="PTHR10683">
    <property type="entry name" value="TRANSALDOLASE"/>
    <property type="match status" value="1"/>
</dbReference>
<dbReference type="PANTHER" id="PTHR10683:SF36">
    <property type="entry name" value="TRANSALDOLASE"/>
    <property type="match status" value="1"/>
</dbReference>
<dbReference type="Pfam" id="PF00923">
    <property type="entry name" value="TAL_FSA"/>
    <property type="match status" value="1"/>
</dbReference>
<dbReference type="SUPFAM" id="SSF51569">
    <property type="entry name" value="Aldolase"/>
    <property type="match status" value="1"/>
</dbReference>
<dbReference type="PROSITE" id="PS01054">
    <property type="entry name" value="TRANSALDOLASE_1"/>
    <property type="match status" value="1"/>
</dbReference>
<dbReference type="PROSITE" id="PS00958">
    <property type="entry name" value="TRANSALDOLASE_2"/>
    <property type="match status" value="1"/>
</dbReference>
<gene>
    <name evidence="1" type="primary">tal</name>
    <name type="ordered locus">GK3385</name>
</gene>